<name>YBEY_STRPQ</name>
<evidence type="ECO:0000255" key="1">
    <source>
        <dbReference type="HAMAP-Rule" id="MF_00009"/>
    </source>
</evidence>
<organism>
    <name type="scientific">Streptococcus pyogenes serotype M3 (strain SSI-1)</name>
    <dbReference type="NCBI Taxonomy" id="193567"/>
    <lineage>
        <taxon>Bacteria</taxon>
        <taxon>Bacillati</taxon>
        <taxon>Bacillota</taxon>
        <taxon>Bacilli</taxon>
        <taxon>Lactobacillales</taxon>
        <taxon>Streptococcaceae</taxon>
        <taxon>Streptococcus</taxon>
    </lineage>
</organism>
<dbReference type="EC" id="3.1.-.-" evidence="1"/>
<dbReference type="EMBL" id="BA000034">
    <property type="protein sequence ID" value="BAC64617.1"/>
    <property type="molecule type" value="Genomic_DNA"/>
</dbReference>
<dbReference type="RefSeq" id="WP_002985748.1">
    <property type="nucleotide sequence ID" value="NC_004606.1"/>
</dbReference>
<dbReference type="SMR" id="P0DF41"/>
<dbReference type="GeneID" id="69901291"/>
<dbReference type="KEGG" id="sps:SPs1522"/>
<dbReference type="HOGENOM" id="CLU_106710_3_0_9"/>
<dbReference type="GO" id="GO:0005737">
    <property type="term" value="C:cytoplasm"/>
    <property type="evidence" value="ECO:0007669"/>
    <property type="project" value="UniProtKB-SubCell"/>
</dbReference>
<dbReference type="GO" id="GO:0004222">
    <property type="term" value="F:metalloendopeptidase activity"/>
    <property type="evidence" value="ECO:0007669"/>
    <property type="project" value="InterPro"/>
</dbReference>
<dbReference type="GO" id="GO:0004521">
    <property type="term" value="F:RNA endonuclease activity"/>
    <property type="evidence" value="ECO:0007669"/>
    <property type="project" value="UniProtKB-UniRule"/>
</dbReference>
<dbReference type="GO" id="GO:0008270">
    <property type="term" value="F:zinc ion binding"/>
    <property type="evidence" value="ECO:0007669"/>
    <property type="project" value="UniProtKB-UniRule"/>
</dbReference>
<dbReference type="GO" id="GO:0006364">
    <property type="term" value="P:rRNA processing"/>
    <property type="evidence" value="ECO:0007669"/>
    <property type="project" value="UniProtKB-UniRule"/>
</dbReference>
<dbReference type="Gene3D" id="3.40.390.30">
    <property type="entry name" value="Metalloproteases ('zincins'), catalytic domain"/>
    <property type="match status" value="1"/>
</dbReference>
<dbReference type="HAMAP" id="MF_00009">
    <property type="entry name" value="Endoribonucl_YbeY"/>
    <property type="match status" value="1"/>
</dbReference>
<dbReference type="InterPro" id="IPR023091">
    <property type="entry name" value="MetalPrtase_cat_dom_sf_prd"/>
</dbReference>
<dbReference type="InterPro" id="IPR002036">
    <property type="entry name" value="YbeY"/>
</dbReference>
<dbReference type="InterPro" id="IPR020549">
    <property type="entry name" value="YbeY_CS"/>
</dbReference>
<dbReference type="NCBIfam" id="TIGR00043">
    <property type="entry name" value="rRNA maturation RNase YbeY"/>
    <property type="match status" value="1"/>
</dbReference>
<dbReference type="PANTHER" id="PTHR46986">
    <property type="entry name" value="ENDORIBONUCLEASE YBEY, CHLOROPLASTIC"/>
    <property type="match status" value="1"/>
</dbReference>
<dbReference type="PANTHER" id="PTHR46986:SF1">
    <property type="entry name" value="ENDORIBONUCLEASE YBEY, CHLOROPLASTIC"/>
    <property type="match status" value="1"/>
</dbReference>
<dbReference type="Pfam" id="PF02130">
    <property type="entry name" value="YbeY"/>
    <property type="match status" value="1"/>
</dbReference>
<dbReference type="SUPFAM" id="SSF55486">
    <property type="entry name" value="Metalloproteases ('zincins'), catalytic domain"/>
    <property type="match status" value="1"/>
</dbReference>
<dbReference type="PROSITE" id="PS01306">
    <property type="entry name" value="UPF0054"/>
    <property type="match status" value="1"/>
</dbReference>
<feature type="chain" id="PRO_0000411560" description="Endoribonuclease YbeY">
    <location>
        <begin position="1"/>
        <end position="165"/>
    </location>
</feature>
<feature type="binding site" evidence="1">
    <location>
        <position position="130"/>
    </location>
    <ligand>
        <name>Zn(2+)</name>
        <dbReference type="ChEBI" id="CHEBI:29105"/>
        <note>catalytic</note>
    </ligand>
</feature>
<feature type="binding site" evidence="1">
    <location>
        <position position="134"/>
    </location>
    <ligand>
        <name>Zn(2+)</name>
        <dbReference type="ChEBI" id="CHEBI:29105"/>
        <note>catalytic</note>
    </ligand>
</feature>
<feature type="binding site" evidence="1">
    <location>
        <position position="140"/>
    </location>
    <ligand>
        <name>Zn(2+)</name>
        <dbReference type="ChEBI" id="CHEBI:29105"/>
        <note>catalytic</note>
    </ligand>
</feature>
<gene>
    <name evidence="1" type="primary">ybeY</name>
    <name type="ordered locus">SPs1522</name>
</gene>
<sequence length="165" mass="19197">MYIEMIDETGQVSQEIMEQTLDLLNFAAQKTGKEEKEMSVTFVTNERSHELNLEYRDTDRPTDVISLEYKPETPILFSQEDLAADPSLAEMMAEFDAYIGELFISIDKAREQSQEYGHSFEREMGFLAVHGFLHINGYDHYTLEEEKEMFTLQEEILTAYGLTRQ</sequence>
<proteinExistence type="inferred from homology"/>
<accession>P0DF41</accession>
<accession>P67141</accession>
<accession>Q8K8D9</accession>
<accession>Q9A143</accession>
<keyword id="KW-0963">Cytoplasm</keyword>
<keyword id="KW-0255">Endonuclease</keyword>
<keyword id="KW-0378">Hydrolase</keyword>
<keyword id="KW-0479">Metal-binding</keyword>
<keyword id="KW-0540">Nuclease</keyword>
<keyword id="KW-0690">Ribosome biogenesis</keyword>
<keyword id="KW-0698">rRNA processing</keyword>
<keyword id="KW-0862">Zinc</keyword>
<protein>
    <recommendedName>
        <fullName evidence="1">Endoribonuclease YbeY</fullName>
        <ecNumber evidence="1">3.1.-.-</ecNumber>
    </recommendedName>
</protein>
<comment type="function">
    <text evidence="1">Single strand-specific metallo-endoribonuclease involved in late-stage 70S ribosome quality control and in maturation of the 3' terminus of the 16S rRNA.</text>
</comment>
<comment type="cofactor">
    <cofactor evidence="1">
        <name>Zn(2+)</name>
        <dbReference type="ChEBI" id="CHEBI:29105"/>
    </cofactor>
    <text evidence="1">Binds 1 zinc ion.</text>
</comment>
<comment type="subcellular location">
    <subcellularLocation>
        <location evidence="1">Cytoplasm</location>
    </subcellularLocation>
</comment>
<comment type="similarity">
    <text evidence="1">Belongs to the endoribonuclease YbeY family.</text>
</comment>
<reference key="1">
    <citation type="journal article" date="2003" name="Genome Res.">
        <title>Genome sequence of an M3 strain of Streptococcus pyogenes reveals a large-scale genomic rearrangement in invasive strains and new insights into phage evolution.</title>
        <authorList>
            <person name="Nakagawa I."/>
            <person name="Kurokawa K."/>
            <person name="Yamashita A."/>
            <person name="Nakata M."/>
            <person name="Tomiyasu Y."/>
            <person name="Okahashi N."/>
            <person name="Kawabata S."/>
            <person name="Yamazaki K."/>
            <person name="Shiba T."/>
            <person name="Yasunaga T."/>
            <person name="Hayashi H."/>
            <person name="Hattori M."/>
            <person name="Hamada S."/>
        </authorList>
    </citation>
    <scope>NUCLEOTIDE SEQUENCE [LARGE SCALE GENOMIC DNA]</scope>
    <source>
        <strain>SSI-1</strain>
    </source>
</reference>